<feature type="chain" id="PRO_0000372639" description="Uncharacterized protein CG13380">
    <location>
        <begin position="1"/>
        <end position="169"/>
    </location>
</feature>
<feature type="modified residue" description="Phosphoserine" evidence="1">
    <location>
        <position position="165"/>
    </location>
</feature>
<evidence type="ECO:0000269" key="1">
    <source>
    </source>
</evidence>
<gene>
    <name type="ORF">CG13380</name>
</gene>
<protein>
    <recommendedName>
        <fullName>Uncharacterized protein CG13380</fullName>
    </recommendedName>
</protein>
<organism>
    <name type="scientific">Drosophila melanogaster</name>
    <name type="common">Fruit fly</name>
    <dbReference type="NCBI Taxonomy" id="7227"/>
    <lineage>
        <taxon>Eukaryota</taxon>
        <taxon>Metazoa</taxon>
        <taxon>Ecdysozoa</taxon>
        <taxon>Arthropoda</taxon>
        <taxon>Hexapoda</taxon>
        <taxon>Insecta</taxon>
        <taxon>Pterygota</taxon>
        <taxon>Neoptera</taxon>
        <taxon>Endopterygota</taxon>
        <taxon>Diptera</taxon>
        <taxon>Brachycera</taxon>
        <taxon>Muscomorpha</taxon>
        <taxon>Ephydroidea</taxon>
        <taxon>Drosophilidae</taxon>
        <taxon>Drosophila</taxon>
        <taxon>Sophophora</taxon>
    </lineage>
</organism>
<name>Y3380_DROME</name>
<dbReference type="EMBL" id="AE014296">
    <property type="protein sequence ID" value="AAF49250.2"/>
    <property type="molecule type" value="Genomic_DNA"/>
</dbReference>
<dbReference type="RefSeq" id="NP_001034030.1">
    <property type="nucleotide sequence ID" value="NM_001038941.3"/>
</dbReference>
<dbReference type="RefSeq" id="NP_001262016.1">
    <property type="nucleotide sequence ID" value="NM_001275087.1"/>
</dbReference>
<dbReference type="RefSeq" id="NP_001287105.1">
    <property type="nucleotide sequence ID" value="NM_001300176.1"/>
</dbReference>
<dbReference type="BioGRID" id="65310">
    <property type="interactions" value="1"/>
</dbReference>
<dbReference type="FunCoup" id="Q9VVR0">
    <property type="interactions" value="8"/>
</dbReference>
<dbReference type="iPTMnet" id="Q9VVR0"/>
<dbReference type="PaxDb" id="7227-FBpp0100006"/>
<dbReference type="EnsemblMetazoa" id="FBtr0100555">
    <property type="protein sequence ID" value="FBpp0100006"/>
    <property type="gene ID" value="FBgn0036799"/>
</dbReference>
<dbReference type="EnsemblMetazoa" id="FBtr0332869">
    <property type="protein sequence ID" value="FBpp0305091"/>
    <property type="gene ID" value="FBgn0036799"/>
</dbReference>
<dbReference type="EnsemblMetazoa" id="FBtr0344520">
    <property type="protein sequence ID" value="FBpp0310871"/>
    <property type="gene ID" value="FBgn0036799"/>
</dbReference>
<dbReference type="GeneID" id="40029"/>
<dbReference type="KEGG" id="dme:Dmel_CG13380"/>
<dbReference type="UCSC" id="CG13380-RB">
    <property type="organism name" value="d. melanogaster"/>
</dbReference>
<dbReference type="AGR" id="FB:FBgn0036799"/>
<dbReference type="FlyBase" id="FBgn0036799">
    <property type="gene designation" value="CG13380"/>
</dbReference>
<dbReference type="VEuPathDB" id="VectorBase:FBgn0036799"/>
<dbReference type="eggNOG" id="ENOG502TCEI">
    <property type="taxonomic scope" value="Eukaryota"/>
</dbReference>
<dbReference type="HOGENOM" id="CLU_125639_0_0_1"/>
<dbReference type="InParanoid" id="Q9VVR0"/>
<dbReference type="OMA" id="RSCPFCN"/>
<dbReference type="OrthoDB" id="7811679at2759"/>
<dbReference type="PhylomeDB" id="Q9VVR0"/>
<dbReference type="BioGRID-ORCS" id="40029">
    <property type="hits" value="0 hits in 1 CRISPR screen"/>
</dbReference>
<dbReference type="GenomeRNAi" id="40029"/>
<dbReference type="PRO" id="PR:Q9VVR0"/>
<dbReference type="Proteomes" id="UP000000803">
    <property type="component" value="Chromosome 3L"/>
</dbReference>
<dbReference type="Bgee" id="FBgn0036799">
    <property type="expression patterns" value="Expressed in imaginal disc and 6 other cell types or tissues"/>
</dbReference>
<accession>Q9VVR0</accession>
<sequence length="169" mass="19725">MPFANEGNDPIAARLSKCYWNLSSPFLKDVIPKKRPSKAFNRKPPTKLESEEEEYHKFERGLHISDLGPKLKETDGQPKLKFELADDYKSSKHCICMRSNTAYECERCHQYFYGRLAQICDLHPNEFFLMDFRNCPFCKAPIEMIKKSPISWETIRKIEEAELPSDGDL</sequence>
<reference key="1">
    <citation type="journal article" date="2000" name="Science">
        <title>The genome sequence of Drosophila melanogaster.</title>
        <authorList>
            <person name="Adams M.D."/>
            <person name="Celniker S.E."/>
            <person name="Holt R.A."/>
            <person name="Evans C.A."/>
            <person name="Gocayne J.D."/>
            <person name="Amanatides P.G."/>
            <person name="Scherer S.E."/>
            <person name="Li P.W."/>
            <person name="Hoskins R.A."/>
            <person name="Galle R.F."/>
            <person name="George R.A."/>
            <person name="Lewis S.E."/>
            <person name="Richards S."/>
            <person name="Ashburner M."/>
            <person name="Henderson S.N."/>
            <person name="Sutton G.G."/>
            <person name="Wortman J.R."/>
            <person name="Yandell M.D."/>
            <person name="Zhang Q."/>
            <person name="Chen L.X."/>
            <person name="Brandon R.C."/>
            <person name="Rogers Y.-H.C."/>
            <person name="Blazej R.G."/>
            <person name="Champe M."/>
            <person name="Pfeiffer B.D."/>
            <person name="Wan K.H."/>
            <person name="Doyle C."/>
            <person name="Baxter E.G."/>
            <person name="Helt G."/>
            <person name="Nelson C.R."/>
            <person name="Miklos G.L.G."/>
            <person name="Abril J.F."/>
            <person name="Agbayani A."/>
            <person name="An H.-J."/>
            <person name="Andrews-Pfannkoch C."/>
            <person name="Baldwin D."/>
            <person name="Ballew R.M."/>
            <person name="Basu A."/>
            <person name="Baxendale J."/>
            <person name="Bayraktaroglu L."/>
            <person name="Beasley E.M."/>
            <person name="Beeson K.Y."/>
            <person name="Benos P.V."/>
            <person name="Berman B.P."/>
            <person name="Bhandari D."/>
            <person name="Bolshakov S."/>
            <person name="Borkova D."/>
            <person name="Botchan M.R."/>
            <person name="Bouck J."/>
            <person name="Brokstein P."/>
            <person name="Brottier P."/>
            <person name="Burtis K.C."/>
            <person name="Busam D.A."/>
            <person name="Butler H."/>
            <person name="Cadieu E."/>
            <person name="Center A."/>
            <person name="Chandra I."/>
            <person name="Cherry J.M."/>
            <person name="Cawley S."/>
            <person name="Dahlke C."/>
            <person name="Davenport L.B."/>
            <person name="Davies P."/>
            <person name="de Pablos B."/>
            <person name="Delcher A."/>
            <person name="Deng Z."/>
            <person name="Mays A.D."/>
            <person name="Dew I."/>
            <person name="Dietz S.M."/>
            <person name="Dodson K."/>
            <person name="Doup L.E."/>
            <person name="Downes M."/>
            <person name="Dugan-Rocha S."/>
            <person name="Dunkov B.C."/>
            <person name="Dunn P."/>
            <person name="Durbin K.J."/>
            <person name="Evangelista C.C."/>
            <person name="Ferraz C."/>
            <person name="Ferriera S."/>
            <person name="Fleischmann W."/>
            <person name="Fosler C."/>
            <person name="Gabrielian A.E."/>
            <person name="Garg N.S."/>
            <person name="Gelbart W.M."/>
            <person name="Glasser K."/>
            <person name="Glodek A."/>
            <person name="Gong F."/>
            <person name="Gorrell J.H."/>
            <person name="Gu Z."/>
            <person name="Guan P."/>
            <person name="Harris M."/>
            <person name="Harris N.L."/>
            <person name="Harvey D.A."/>
            <person name="Heiman T.J."/>
            <person name="Hernandez J.R."/>
            <person name="Houck J."/>
            <person name="Hostin D."/>
            <person name="Houston K.A."/>
            <person name="Howland T.J."/>
            <person name="Wei M.-H."/>
            <person name="Ibegwam C."/>
            <person name="Jalali M."/>
            <person name="Kalush F."/>
            <person name="Karpen G.H."/>
            <person name="Ke Z."/>
            <person name="Kennison J.A."/>
            <person name="Ketchum K.A."/>
            <person name="Kimmel B.E."/>
            <person name="Kodira C.D."/>
            <person name="Kraft C.L."/>
            <person name="Kravitz S."/>
            <person name="Kulp D."/>
            <person name="Lai Z."/>
            <person name="Lasko P."/>
            <person name="Lei Y."/>
            <person name="Levitsky A.A."/>
            <person name="Li J.H."/>
            <person name="Li Z."/>
            <person name="Liang Y."/>
            <person name="Lin X."/>
            <person name="Liu X."/>
            <person name="Mattei B."/>
            <person name="McIntosh T.C."/>
            <person name="McLeod M.P."/>
            <person name="McPherson D."/>
            <person name="Merkulov G."/>
            <person name="Milshina N.V."/>
            <person name="Mobarry C."/>
            <person name="Morris J."/>
            <person name="Moshrefi A."/>
            <person name="Mount S.M."/>
            <person name="Moy M."/>
            <person name="Murphy B."/>
            <person name="Murphy L."/>
            <person name="Muzny D.M."/>
            <person name="Nelson D.L."/>
            <person name="Nelson D.R."/>
            <person name="Nelson K.A."/>
            <person name="Nixon K."/>
            <person name="Nusskern D.R."/>
            <person name="Pacleb J.M."/>
            <person name="Palazzolo M."/>
            <person name="Pittman G.S."/>
            <person name="Pan S."/>
            <person name="Pollard J."/>
            <person name="Puri V."/>
            <person name="Reese M.G."/>
            <person name="Reinert K."/>
            <person name="Remington K."/>
            <person name="Saunders R.D.C."/>
            <person name="Scheeler F."/>
            <person name="Shen H."/>
            <person name="Shue B.C."/>
            <person name="Siden-Kiamos I."/>
            <person name="Simpson M."/>
            <person name="Skupski M.P."/>
            <person name="Smith T.J."/>
            <person name="Spier E."/>
            <person name="Spradling A.C."/>
            <person name="Stapleton M."/>
            <person name="Strong R."/>
            <person name="Sun E."/>
            <person name="Svirskas R."/>
            <person name="Tector C."/>
            <person name="Turner R."/>
            <person name="Venter E."/>
            <person name="Wang A.H."/>
            <person name="Wang X."/>
            <person name="Wang Z.-Y."/>
            <person name="Wassarman D.A."/>
            <person name="Weinstock G.M."/>
            <person name="Weissenbach J."/>
            <person name="Williams S.M."/>
            <person name="Woodage T."/>
            <person name="Worley K.C."/>
            <person name="Wu D."/>
            <person name="Yang S."/>
            <person name="Yao Q.A."/>
            <person name="Ye J."/>
            <person name="Yeh R.-F."/>
            <person name="Zaveri J.S."/>
            <person name="Zhan M."/>
            <person name="Zhang G."/>
            <person name="Zhao Q."/>
            <person name="Zheng L."/>
            <person name="Zheng X.H."/>
            <person name="Zhong F.N."/>
            <person name="Zhong W."/>
            <person name="Zhou X."/>
            <person name="Zhu S.C."/>
            <person name="Zhu X."/>
            <person name="Smith H.O."/>
            <person name="Gibbs R.A."/>
            <person name="Myers E.W."/>
            <person name="Rubin G.M."/>
            <person name="Venter J.C."/>
        </authorList>
    </citation>
    <scope>NUCLEOTIDE SEQUENCE [LARGE SCALE GENOMIC DNA]</scope>
    <source>
        <strain>Berkeley</strain>
    </source>
</reference>
<reference key="2">
    <citation type="journal article" date="2002" name="Genome Biol.">
        <title>Annotation of the Drosophila melanogaster euchromatic genome: a systematic review.</title>
        <authorList>
            <person name="Misra S."/>
            <person name="Crosby M.A."/>
            <person name="Mungall C.J."/>
            <person name="Matthews B.B."/>
            <person name="Campbell K.S."/>
            <person name="Hradecky P."/>
            <person name="Huang Y."/>
            <person name="Kaminker J.S."/>
            <person name="Millburn G.H."/>
            <person name="Prochnik S.E."/>
            <person name="Smith C.D."/>
            <person name="Tupy J.L."/>
            <person name="Whitfield E.J."/>
            <person name="Bayraktaroglu L."/>
            <person name="Berman B.P."/>
            <person name="Bettencourt B.R."/>
            <person name="Celniker S.E."/>
            <person name="de Grey A.D.N.J."/>
            <person name="Drysdale R.A."/>
            <person name="Harris N.L."/>
            <person name="Richter J."/>
            <person name="Russo S."/>
            <person name="Schroeder A.J."/>
            <person name="Shu S.Q."/>
            <person name="Stapleton M."/>
            <person name="Yamada C."/>
            <person name="Ashburner M."/>
            <person name="Gelbart W.M."/>
            <person name="Rubin G.M."/>
            <person name="Lewis S.E."/>
        </authorList>
    </citation>
    <scope>GENOME REANNOTATION</scope>
    <source>
        <strain>Berkeley</strain>
    </source>
</reference>
<reference key="3">
    <citation type="journal article" date="2007" name="Mol. Biosyst.">
        <title>An integrated chemical, mass spectrometric and computational strategy for (quantitative) phosphoproteomics: application to Drosophila melanogaster Kc167 cells.</title>
        <authorList>
            <person name="Bodenmiller B."/>
            <person name="Mueller L.N."/>
            <person name="Pedrioli P.G.A."/>
            <person name="Pflieger D."/>
            <person name="Juenger M.A."/>
            <person name="Eng J.K."/>
            <person name="Aebersold R."/>
            <person name="Tao W.A."/>
        </authorList>
    </citation>
    <scope>PHOSPHORYLATION [LARGE SCALE ANALYSIS] AT SER-165</scope>
    <scope>IDENTIFICATION BY MASS SPECTROMETRY</scope>
</reference>
<proteinExistence type="evidence at protein level"/>
<keyword id="KW-0597">Phosphoprotein</keyword>
<keyword id="KW-1185">Reference proteome</keyword>